<organism evidence="2">
    <name type="scientific">Xenopus boumbaensis</name>
    <name type="common">Mawa clawed frog</name>
    <dbReference type="NCBI Taxonomy" id="288550"/>
    <lineage>
        <taxon>Eukaryota</taxon>
        <taxon>Metazoa</taxon>
        <taxon>Chordata</taxon>
        <taxon>Craniata</taxon>
        <taxon>Vertebrata</taxon>
        <taxon>Euteleostomi</taxon>
        <taxon>Amphibia</taxon>
        <taxon>Batrachia</taxon>
        <taxon>Anura</taxon>
        <taxon>Pipoidea</taxon>
        <taxon>Pipidae</taxon>
        <taxon>Xenopodinae</taxon>
        <taxon>Xenopus</taxon>
        <taxon>Xenopus</taxon>
    </lineage>
</organism>
<name>CRBM3_XENBM</name>
<feature type="peptide" id="PRO_0000440787" description="Caerulein precursor fragment-related peptide BM3" evidence="1">
    <location>
        <begin position="1"/>
        <end position="17"/>
    </location>
</feature>
<feature type="modified residue" description="Valine amide" evidence="1">
    <location>
        <position position="17"/>
    </location>
</feature>
<proteinExistence type="evidence at protein level"/>
<keyword id="KW-0027">Amidation</keyword>
<keyword id="KW-0903">Direct protein sequencing</keyword>
<keyword id="KW-0964">Secreted</keyword>
<evidence type="ECO:0000269" key="1">
    <source>
    </source>
</evidence>
<evidence type="ECO:0000303" key="2">
    <source>
    </source>
</evidence>
<evidence type="ECO:0000305" key="3"/>
<evidence type="ECO:0000305" key="4">
    <source>
    </source>
</evidence>
<protein>
    <recommendedName>
        <fullName evidence="2">Caerulein precursor fragment-related peptide BM3</fullName>
    </recommendedName>
    <alternativeName>
        <fullName evidence="2">CPF-RP-BM3</fullName>
    </alternativeName>
</protein>
<reference evidence="3" key="1">
    <citation type="journal article" date="2015" name="Peptides">
        <title>Host-defense and trefoil factor family peptides in skin secretions of the Mawa clawed frog Xenopus boumbaensis (Pipidae).</title>
        <authorList>
            <person name="Conlon J.M."/>
            <person name="Mechkarska M."/>
            <person name="Kolodziejek J."/>
            <person name="Leprince J."/>
            <person name="Coquet L."/>
            <person name="Jouenne T."/>
            <person name="Vaudry H."/>
            <person name="Nowotny N."/>
            <person name="King J.D."/>
        </authorList>
    </citation>
    <scope>PROTEIN SEQUENCE</scope>
    <scope>SUBCELLULAR LOCATION</scope>
    <scope>MASS SPECTROMETRY</scope>
    <scope>AMIDATION AT VAL-17</scope>
    <source>
        <tissue evidence="2">Skin secretion</tissue>
    </source>
</reference>
<comment type="subcellular location">
    <subcellularLocation>
        <location evidence="1">Secreted</location>
    </subcellularLocation>
</comment>
<comment type="tissue specificity">
    <text evidence="4">Expressed by the skin glands.</text>
</comment>
<comment type="mass spectrometry" mass="1628.0" method="MALDI" evidence="1"/>
<sequence length="17" mass="1629">GIGSALAKAAKLIEGMV</sequence>
<dbReference type="GO" id="GO:0005576">
    <property type="term" value="C:extracellular region"/>
    <property type="evidence" value="ECO:0007669"/>
    <property type="project" value="UniProtKB-SubCell"/>
</dbReference>
<accession>C0HKL1</accession>